<keyword id="KW-1185">Reference proteome</keyword>
<keyword id="KW-0687">Ribonucleoprotein</keyword>
<keyword id="KW-0689">Ribosomal protein</keyword>
<keyword id="KW-0694">RNA-binding</keyword>
<keyword id="KW-0699">rRNA-binding</keyword>
<reference key="1">
    <citation type="journal article" date="2002" name="J. Bacteriol.">
        <title>Genome sequence and analysis of the oral bacterium Fusobacterium nucleatum strain ATCC 25586.</title>
        <authorList>
            <person name="Kapatral V."/>
            <person name="Anderson I."/>
            <person name="Ivanova N."/>
            <person name="Reznik G."/>
            <person name="Los T."/>
            <person name="Lykidis A."/>
            <person name="Bhattacharyya A."/>
            <person name="Bartman A."/>
            <person name="Gardner W."/>
            <person name="Grechkin G."/>
            <person name="Zhu L."/>
            <person name="Vasieva O."/>
            <person name="Chu L."/>
            <person name="Kogan Y."/>
            <person name="Chaga O."/>
            <person name="Goltsman E."/>
            <person name="Bernal A."/>
            <person name="Larsen N."/>
            <person name="D'Souza M."/>
            <person name="Walunas T."/>
            <person name="Pusch G."/>
            <person name="Haselkorn R."/>
            <person name="Fonstein M."/>
            <person name="Kyrpides N.C."/>
            <person name="Overbeek R."/>
        </authorList>
    </citation>
    <scope>NUCLEOTIDE SEQUENCE [LARGE SCALE GENOMIC DNA]</scope>
    <source>
        <strain>ATCC 25586 / DSM 15643 / BCRC 10681 / CIP 101130 / JCM 8532 / KCTC 2640 / LMG 13131 / VPI 4355</strain>
    </source>
</reference>
<comment type="function">
    <text evidence="1">Protein S19 forms a complex with S13 that binds strongly to the 16S ribosomal RNA.</text>
</comment>
<comment type="similarity">
    <text evidence="1">Belongs to the universal ribosomal protein uS19 family.</text>
</comment>
<accession>Q8RIF9</accession>
<name>RS19_FUSNN</name>
<gene>
    <name evidence="1" type="primary">rpsS</name>
    <name type="ordered locus">FN1641</name>
</gene>
<sequence length="91" mass="10199">MARSLKKGPFCDHHLMAKVEEAVASGNNKAVIKTWSRRSTIFPNFIGLTFGVYNGKKHIPVHVTEQMVGHKLGEFAPTRTYHGHGVDKKKK</sequence>
<feature type="chain" id="PRO_0000129826" description="Small ribosomal subunit protein uS19">
    <location>
        <begin position="1"/>
        <end position="91"/>
    </location>
</feature>
<proteinExistence type="inferred from homology"/>
<organism>
    <name type="scientific">Fusobacterium nucleatum subsp. nucleatum (strain ATCC 25586 / DSM 15643 / BCRC 10681 / CIP 101130 / JCM 8532 / KCTC 2640 / LMG 13131 / VPI 4355)</name>
    <dbReference type="NCBI Taxonomy" id="190304"/>
    <lineage>
        <taxon>Bacteria</taxon>
        <taxon>Fusobacteriati</taxon>
        <taxon>Fusobacteriota</taxon>
        <taxon>Fusobacteriia</taxon>
        <taxon>Fusobacteriales</taxon>
        <taxon>Fusobacteriaceae</taxon>
        <taxon>Fusobacterium</taxon>
    </lineage>
</organism>
<dbReference type="EMBL" id="AE009951">
    <property type="protein sequence ID" value="AAL93756.1"/>
    <property type="molecule type" value="Genomic_DNA"/>
</dbReference>
<dbReference type="RefSeq" id="NP_602457.1">
    <property type="nucleotide sequence ID" value="NC_003454.1"/>
</dbReference>
<dbReference type="RefSeq" id="WP_005897301.1">
    <property type="nucleotide sequence ID" value="NZ_OZ209243.1"/>
</dbReference>
<dbReference type="SMR" id="Q8RIF9"/>
<dbReference type="FunCoup" id="Q8RIF9">
    <property type="interactions" value="345"/>
</dbReference>
<dbReference type="STRING" id="190304.FN1641"/>
<dbReference type="PaxDb" id="190304-FN1641"/>
<dbReference type="EnsemblBacteria" id="AAL93756">
    <property type="protein sequence ID" value="AAL93756"/>
    <property type="gene ID" value="FN1641"/>
</dbReference>
<dbReference type="GeneID" id="79799762"/>
<dbReference type="KEGG" id="fnu:FN1641"/>
<dbReference type="PATRIC" id="fig|190304.8.peg.134"/>
<dbReference type="eggNOG" id="COG0185">
    <property type="taxonomic scope" value="Bacteria"/>
</dbReference>
<dbReference type="HOGENOM" id="CLU_144911_0_1_0"/>
<dbReference type="InParanoid" id="Q8RIF9"/>
<dbReference type="BioCyc" id="FNUC190304:G1FZS-144-MONOMER"/>
<dbReference type="Proteomes" id="UP000002521">
    <property type="component" value="Chromosome"/>
</dbReference>
<dbReference type="GO" id="GO:0005737">
    <property type="term" value="C:cytoplasm"/>
    <property type="evidence" value="ECO:0007669"/>
    <property type="project" value="UniProtKB-ARBA"/>
</dbReference>
<dbReference type="GO" id="GO:0015935">
    <property type="term" value="C:small ribosomal subunit"/>
    <property type="evidence" value="ECO:0007669"/>
    <property type="project" value="InterPro"/>
</dbReference>
<dbReference type="GO" id="GO:0019843">
    <property type="term" value="F:rRNA binding"/>
    <property type="evidence" value="ECO:0007669"/>
    <property type="project" value="UniProtKB-UniRule"/>
</dbReference>
<dbReference type="GO" id="GO:0003735">
    <property type="term" value="F:structural constituent of ribosome"/>
    <property type="evidence" value="ECO:0000318"/>
    <property type="project" value="GO_Central"/>
</dbReference>
<dbReference type="GO" id="GO:0000028">
    <property type="term" value="P:ribosomal small subunit assembly"/>
    <property type="evidence" value="ECO:0000318"/>
    <property type="project" value="GO_Central"/>
</dbReference>
<dbReference type="GO" id="GO:0006412">
    <property type="term" value="P:translation"/>
    <property type="evidence" value="ECO:0007669"/>
    <property type="project" value="UniProtKB-UniRule"/>
</dbReference>
<dbReference type="FunFam" id="3.30.860.10:FF:000001">
    <property type="entry name" value="30S ribosomal protein S19"/>
    <property type="match status" value="1"/>
</dbReference>
<dbReference type="Gene3D" id="3.30.860.10">
    <property type="entry name" value="30s Ribosomal Protein S19, Chain A"/>
    <property type="match status" value="1"/>
</dbReference>
<dbReference type="HAMAP" id="MF_00531">
    <property type="entry name" value="Ribosomal_uS19"/>
    <property type="match status" value="1"/>
</dbReference>
<dbReference type="InterPro" id="IPR002222">
    <property type="entry name" value="Ribosomal_uS19"/>
</dbReference>
<dbReference type="InterPro" id="IPR005732">
    <property type="entry name" value="Ribosomal_uS19_bac-type"/>
</dbReference>
<dbReference type="InterPro" id="IPR020934">
    <property type="entry name" value="Ribosomal_uS19_CS"/>
</dbReference>
<dbReference type="InterPro" id="IPR023575">
    <property type="entry name" value="Ribosomal_uS19_SF"/>
</dbReference>
<dbReference type="NCBIfam" id="TIGR01050">
    <property type="entry name" value="rpsS_bact"/>
    <property type="match status" value="1"/>
</dbReference>
<dbReference type="PANTHER" id="PTHR11880">
    <property type="entry name" value="RIBOSOMAL PROTEIN S19P FAMILY MEMBER"/>
    <property type="match status" value="1"/>
</dbReference>
<dbReference type="PANTHER" id="PTHR11880:SF8">
    <property type="entry name" value="SMALL RIBOSOMAL SUBUNIT PROTEIN US19M"/>
    <property type="match status" value="1"/>
</dbReference>
<dbReference type="Pfam" id="PF00203">
    <property type="entry name" value="Ribosomal_S19"/>
    <property type="match status" value="1"/>
</dbReference>
<dbReference type="PIRSF" id="PIRSF002144">
    <property type="entry name" value="Ribosomal_S19"/>
    <property type="match status" value="1"/>
</dbReference>
<dbReference type="PRINTS" id="PR00975">
    <property type="entry name" value="RIBOSOMALS19"/>
</dbReference>
<dbReference type="SUPFAM" id="SSF54570">
    <property type="entry name" value="Ribosomal protein S19"/>
    <property type="match status" value="1"/>
</dbReference>
<dbReference type="PROSITE" id="PS00323">
    <property type="entry name" value="RIBOSOMAL_S19"/>
    <property type="match status" value="1"/>
</dbReference>
<protein>
    <recommendedName>
        <fullName evidence="1">Small ribosomal subunit protein uS19</fullName>
    </recommendedName>
    <alternativeName>
        <fullName evidence="2">30S ribosomal protein S19</fullName>
    </alternativeName>
</protein>
<evidence type="ECO:0000255" key="1">
    <source>
        <dbReference type="HAMAP-Rule" id="MF_00531"/>
    </source>
</evidence>
<evidence type="ECO:0000305" key="2"/>